<feature type="chain" id="PRO_0000155312" description="Thymidylate kinase">
    <location>
        <begin position="1"/>
        <end position="206"/>
    </location>
</feature>
<feature type="binding site" evidence="2">
    <location>
        <begin position="10"/>
        <end position="17"/>
    </location>
    <ligand>
        <name>ATP</name>
        <dbReference type="ChEBI" id="CHEBI:30616"/>
    </ligand>
</feature>
<keyword id="KW-0067">ATP-binding</keyword>
<keyword id="KW-0418">Kinase</keyword>
<keyword id="KW-0545">Nucleotide biosynthesis</keyword>
<keyword id="KW-0547">Nucleotide-binding</keyword>
<keyword id="KW-1185">Reference proteome</keyword>
<keyword id="KW-0808">Transferase</keyword>
<dbReference type="EC" id="2.7.4.9"/>
<dbReference type="EMBL" id="AE002098">
    <property type="protein sequence ID" value="AAF41088.1"/>
    <property type="molecule type" value="Genomic_DNA"/>
</dbReference>
<dbReference type="PIR" id="B81173">
    <property type="entry name" value="B81173"/>
</dbReference>
<dbReference type="RefSeq" id="NP_273712.1">
    <property type="nucleotide sequence ID" value="NC_003112.2"/>
</dbReference>
<dbReference type="RefSeq" id="WP_002225507.1">
    <property type="nucleotide sequence ID" value="NC_003112.2"/>
</dbReference>
<dbReference type="SMR" id="Q9K0D9"/>
<dbReference type="FunCoup" id="Q9K0D9">
    <property type="interactions" value="443"/>
</dbReference>
<dbReference type="STRING" id="122586.NMB0670"/>
<dbReference type="PaxDb" id="122586-NMB0670"/>
<dbReference type="KEGG" id="nme:NMB0670"/>
<dbReference type="PATRIC" id="fig|122586.8.peg.839"/>
<dbReference type="HOGENOM" id="CLU_049131_0_2_4"/>
<dbReference type="InParanoid" id="Q9K0D9"/>
<dbReference type="OrthoDB" id="9774907at2"/>
<dbReference type="Proteomes" id="UP000000425">
    <property type="component" value="Chromosome"/>
</dbReference>
<dbReference type="GO" id="GO:0005737">
    <property type="term" value="C:cytoplasm"/>
    <property type="evidence" value="ECO:0000318"/>
    <property type="project" value="GO_Central"/>
</dbReference>
<dbReference type="GO" id="GO:0005829">
    <property type="term" value="C:cytosol"/>
    <property type="evidence" value="ECO:0000318"/>
    <property type="project" value="GO_Central"/>
</dbReference>
<dbReference type="GO" id="GO:0005524">
    <property type="term" value="F:ATP binding"/>
    <property type="evidence" value="ECO:0007669"/>
    <property type="project" value="UniProtKB-UniRule"/>
</dbReference>
<dbReference type="GO" id="GO:0004798">
    <property type="term" value="F:dTMP kinase activity"/>
    <property type="evidence" value="ECO:0000318"/>
    <property type="project" value="GO_Central"/>
</dbReference>
<dbReference type="GO" id="GO:0006233">
    <property type="term" value="P:dTDP biosynthetic process"/>
    <property type="evidence" value="ECO:0000318"/>
    <property type="project" value="GO_Central"/>
</dbReference>
<dbReference type="GO" id="GO:0006235">
    <property type="term" value="P:dTTP biosynthetic process"/>
    <property type="evidence" value="ECO:0000318"/>
    <property type="project" value="GO_Central"/>
</dbReference>
<dbReference type="GO" id="GO:0006227">
    <property type="term" value="P:dUDP biosynthetic process"/>
    <property type="evidence" value="ECO:0000318"/>
    <property type="project" value="GO_Central"/>
</dbReference>
<dbReference type="CDD" id="cd01672">
    <property type="entry name" value="TMPK"/>
    <property type="match status" value="1"/>
</dbReference>
<dbReference type="FunFam" id="3.40.50.300:FF:000225">
    <property type="entry name" value="Thymidylate kinase"/>
    <property type="match status" value="1"/>
</dbReference>
<dbReference type="Gene3D" id="3.40.50.300">
    <property type="entry name" value="P-loop containing nucleotide triphosphate hydrolases"/>
    <property type="match status" value="1"/>
</dbReference>
<dbReference type="HAMAP" id="MF_00165">
    <property type="entry name" value="Thymidylate_kinase"/>
    <property type="match status" value="1"/>
</dbReference>
<dbReference type="InterPro" id="IPR027417">
    <property type="entry name" value="P-loop_NTPase"/>
</dbReference>
<dbReference type="InterPro" id="IPR039430">
    <property type="entry name" value="Thymidylate_kin-like_dom"/>
</dbReference>
<dbReference type="InterPro" id="IPR018094">
    <property type="entry name" value="Thymidylate_kinase"/>
</dbReference>
<dbReference type="NCBIfam" id="TIGR00041">
    <property type="entry name" value="DTMP_kinase"/>
    <property type="match status" value="1"/>
</dbReference>
<dbReference type="PANTHER" id="PTHR10344">
    <property type="entry name" value="THYMIDYLATE KINASE"/>
    <property type="match status" value="1"/>
</dbReference>
<dbReference type="PANTHER" id="PTHR10344:SF4">
    <property type="entry name" value="UMP-CMP KINASE 2, MITOCHONDRIAL"/>
    <property type="match status" value="1"/>
</dbReference>
<dbReference type="Pfam" id="PF02223">
    <property type="entry name" value="Thymidylate_kin"/>
    <property type="match status" value="1"/>
</dbReference>
<dbReference type="SUPFAM" id="SSF52540">
    <property type="entry name" value="P-loop containing nucleoside triphosphate hydrolases"/>
    <property type="match status" value="1"/>
</dbReference>
<name>KTHY_NEIMB</name>
<evidence type="ECO:0000250" key="1"/>
<evidence type="ECO:0000255" key="2"/>
<evidence type="ECO:0000305" key="3"/>
<proteinExistence type="inferred from homology"/>
<sequence length="206" mass="22986">MKPQFITLDGIDGAGKSTNLAVIKAWFERRGLPVLFTREPGGTPVGEALREILLNPETKAGLRAETLMMFAARMQHIEEVILPALSDGIHVVSDRFTDATFAYQGGGRGMPSEDIEILEHWVQGGLKPDLTLLLDVPLEVSMARIGQTREKDRFEQEQADFFMRVRGVYLDRAAACPERYAVIDSNRNLDEVRNSIEKVLDGHFGC</sequence>
<comment type="function">
    <text evidence="1">Phosphorylation of dTMP to form dTDP in both de novo and salvage pathways of dTTP synthesis.</text>
</comment>
<comment type="catalytic activity">
    <reaction>
        <text>dTMP + ATP = dTDP + ADP</text>
        <dbReference type="Rhea" id="RHEA:13517"/>
        <dbReference type="ChEBI" id="CHEBI:30616"/>
        <dbReference type="ChEBI" id="CHEBI:58369"/>
        <dbReference type="ChEBI" id="CHEBI:63528"/>
        <dbReference type="ChEBI" id="CHEBI:456216"/>
        <dbReference type="EC" id="2.7.4.9"/>
    </reaction>
</comment>
<comment type="similarity">
    <text evidence="3">Belongs to the thymidylate kinase family.</text>
</comment>
<gene>
    <name type="primary">tmk</name>
    <name type="ordered locus">NMB0670</name>
</gene>
<accession>Q9K0D9</accession>
<protein>
    <recommendedName>
        <fullName>Thymidylate kinase</fullName>
        <ecNumber>2.7.4.9</ecNumber>
    </recommendedName>
    <alternativeName>
        <fullName>dTMP kinase</fullName>
    </alternativeName>
</protein>
<reference key="1">
    <citation type="journal article" date="2000" name="Science">
        <title>Complete genome sequence of Neisseria meningitidis serogroup B strain MC58.</title>
        <authorList>
            <person name="Tettelin H."/>
            <person name="Saunders N.J."/>
            <person name="Heidelberg J.F."/>
            <person name="Jeffries A.C."/>
            <person name="Nelson K.E."/>
            <person name="Eisen J.A."/>
            <person name="Ketchum K.A."/>
            <person name="Hood D.W."/>
            <person name="Peden J.F."/>
            <person name="Dodson R.J."/>
            <person name="Nelson W.C."/>
            <person name="Gwinn M.L."/>
            <person name="DeBoy R.T."/>
            <person name="Peterson J.D."/>
            <person name="Hickey E.K."/>
            <person name="Haft D.H."/>
            <person name="Salzberg S.L."/>
            <person name="White O."/>
            <person name="Fleischmann R.D."/>
            <person name="Dougherty B.A."/>
            <person name="Mason T.M."/>
            <person name="Ciecko A."/>
            <person name="Parksey D.S."/>
            <person name="Blair E."/>
            <person name="Cittone H."/>
            <person name="Clark E.B."/>
            <person name="Cotton M.D."/>
            <person name="Utterback T.R."/>
            <person name="Khouri H.M."/>
            <person name="Qin H."/>
            <person name="Vamathevan J.J."/>
            <person name="Gill J."/>
            <person name="Scarlato V."/>
            <person name="Masignani V."/>
            <person name="Pizza M."/>
            <person name="Grandi G."/>
            <person name="Sun L."/>
            <person name="Smith H.O."/>
            <person name="Fraser C.M."/>
            <person name="Moxon E.R."/>
            <person name="Rappuoli R."/>
            <person name="Venter J.C."/>
        </authorList>
    </citation>
    <scope>NUCLEOTIDE SEQUENCE [LARGE SCALE GENOMIC DNA]</scope>
    <source>
        <strain>ATCC BAA-335 / MC58</strain>
    </source>
</reference>
<organism>
    <name type="scientific">Neisseria meningitidis serogroup B (strain ATCC BAA-335 / MC58)</name>
    <dbReference type="NCBI Taxonomy" id="122586"/>
    <lineage>
        <taxon>Bacteria</taxon>
        <taxon>Pseudomonadati</taxon>
        <taxon>Pseudomonadota</taxon>
        <taxon>Betaproteobacteria</taxon>
        <taxon>Neisseriales</taxon>
        <taxon>Neisseriaceae</taxon>
        <taxon>Neisseria</taxon>
    </lineage>
</organism>